<feature type="chain" id="PRO_1000121310" description="GTPase Era">
    <location>
        <begin position="1"/>
        <end position="295"/>
    </location>
</feature>
<feature type="domain" description="Era-type G" evidence="2">
    <location>
        <begin position="3"/>
        <end position="170"/>
    </location>
</feature>
<feature type="domain" description="KH type-2" evidence="1">
    <location>
        <begin position="201"/>
        <end position="278"/>
    </location>
</feature>
<feature type="region of interest" description="G1" evidence="2">
    <location>
        <begin position="11"/>
        <end position="18"/>
    </location>
</feature>
<feature type="region of interest" description="G2" evidence="2">
    <location>
        <begin position="37"/>
        <end position="41"/>
    </location>
</feature>
<feature type="region of interest" description="G3" evidence="2">
    <location>
        <begin position="58"/>
        <end position="61"/>
    </location>
</feature>
<feature type="region of interest" description="G4" evidence="2">
    <location>
        <begin position="120"/>
        <end position="123"/>
    </location>
</feature>
<feature type="region of interest" description="G5" evidence="2">
    <location>
        <begin position="149"/>
        <end position="151"/>
    </location>
</feature>
<feature type="binding site" evidence="1">
    <location>
        <begin position="11"/>
        <end position="18"/>
    </location>
    <ligand>
        <name>GTP</name>
        <dbReference type="ChEBI" id="CHEBI:37565"/>
    </ligand>
</feature>
<feature type="binding site" evidence="1">
    <location>
        <begin position="58"/>
        <end position="62"/>
    </location>
    <ligand>
        <name>GTP</name>
        <dbReference type="ChEBI" id="CHEBI:37565"/>
    </ligand>
</feature>
<feature type="binding site" evidence="1">
    <location>
        <begin position="120"/>
        <end position="123"/>
    </location>
    <ligand>
        <name>GTP</name>
        <dbReference type="ChEBI" id="CHEBI:37565"/>
    </ligand>
</feature>
<gene>
    <name evidence="1" type="primary">era</name>
    <name type="ordered locus">CLL_A0906</name>
</gene>
<name>ERA_CLOBB</name>
<reference key="1">
    <citation type="submission" date="2008-04" db="EMBL/GenBank/DDBJ databases">
        <title>Complete sequence of Clostridium botulinum strain Eklund.</title>
        <authorList>
            <person name="Brinkac L.M."/>
            <person name="Brown J.L."/>
            <person name="Bruce D."/>
            <person name="Detter C."/>
            <person name="Munk C."/>
            <person name="Smith L.A."/>
            <person name="Smith T.J."/>
            <person name="Sutton G."/>
            <person name="Brettin T.S."/>
        </authorList>
    </citation>
    <scope>NUCLEOTIDE SEQUENCE [LARGE SCALE GENOMIC DNA]</scope>
    <source>
        <strain>Eklund 17B / Type B</strain>
    </source>
</reference>
<sequence>MFKSGFVTIVGRPNVGKSTLLNYIMGEKLSIVSNKPQTTRNNIQTILTGEDYQIVFVDTPGIHKPKHKLGEYMVNSAKDSTNDVDLVLFLTNPDEEIGKGDKFILESLKDKKCPVYLVLNKIDESTPERVAKSLEMYSSEFNFKEIVPIAAIKGKNVDTLVDLMKTELPEGPKYYPEDMITDVPERFVVSEIVREKALRCLRDEVPHGIAVDIIQMKQSDNGTYHIEVDLICEKDSHKGIIIGKNGQMLKKIGETSRYELERFLRTKVNVKIWVKVRKEWRDNQNLLKELGYKKK</sequence>
<protein>
    <recommendedName>
        <fullName evidence="1">GTPase Era</fullName>
    </recommendedName>
</protein>
<evidence type="ECO:0000255" key="1">
    <source>
        <dbReference type="HAMAP-Rule" id="MF_00367"/>
    </source>
</evidence>
<evidence type="ECO:0000255" key="2">
    <source>
        <dbReference type="PROSITE-ProRule" id="PRU01050"/>
    </source>
</evidence>
<keyword id="KW-1003">Cell membrane</keyword>
<keyword id="KW-0963">Cytoplasm</keyword>
<keyword id="KW-0342">GTP-binding</keyword>
<keyword id="KW-0472">Membrane</keyword>
<keyword id="KW-0547">Nucleotide-binding</keyword>
<keyword id="KW-0690">Ribosome biogenesis</keyword>
<keyword id="KW-0694">RNA-binding</keyword>
<keyword id="KW-0699">rRNA-binding</keyword>
<proteinExistence type="inferred from homology"/>
<comment type="function">
    <text evidence="1">An essential GTPase that binds both GDP and GTP, with rapid nucleotide exchange. Plays a role in 16S rRNA processing and 30S ribosomal subunit biogenesis and possibly also in cell cycle regulation and energy metabolism.</text>
</comment>
<comment type="subunit">
    <text evidence="1">Monomer.</text>
</comment>
<comment type="subcellular location">
    <subcellularLocation>
        <location>Cytoplasm</location>
    </subcellularLocation>
    <subcellularLocation>
        <location evidence="1">Cell membrane</location>
        <topology evidence="1">Peripheral membrane protein</topology>
    </subcellularLocation>
</comment>
<comment type="similarity">
    <text evidence="1 2">Belongs to the TRAFAC class TrmE-Era-EngA-EngB-Septin-like GTPase superfamily. Era GTPase family.</text>
</comment>
<organism>
    <name type="scientific">Clostridium botulinum (strain Eklund 17B / Type B)</name>
    <dbReference type="NCBI Taxonomy" id="935198"/>
    <lineage>
        <taxon>Bacteria</taxon>
        <taxon>Bacillati</taxon>
        <taxon>Bacillota</taxon>
        <taxon>Clostridia</taxon>
        <taxon>Eubacteriales</taxon>
        <taxon>Clostridiaceae</taxon>
        <taxon>Clostridium</taxon>
    </lineage>
</organism>
<accession>B2TMB9</accession>
<dbReference type="EMBL" id="CP001056">
    <property type="protein sequence ID" value="ACD24343.1"/>
    <property type="molecule type" value="Genomic_DNA"/>
</dbReference>
<dbReference type="SMR" id="B2TMB9"/>
<dbReference type="KEGG" id="cbk:CLL_A0906"/>
<dbReference type="PATRIC" id="fig|935198.13.peg.856"/>
<dbReference type="HOGENOM" id="CLU_038009_1_0_9"/>
<dbReference type="Proteomes" id="UP000001195">
    <property type="component" value="Chromosome"/>
</dbReference>
<dbReference type="GO" id="GO:0005829">
    <property type="term" value="C:cytosol"/>
    <property type="evidence" value="ECO:0007669"/>
    <property type="project" value="TreeGrafter"/>
</dbReference>
<dbReference type="GO" id="GO:0005886">
    <property type="term" value="C:plasma membrane"/>
    <property type="evidence" value="ECO:0007669"/>
    <property type="project" value="UniProtKB-SubCell"/>
</dbReference>
<dbReference type="GO" id="GO:0005525">
    <property type="term" value="F:GTP binding"/>
    <property type="evidence" value="ECO:0007669"/>
    <property type="project" value="UniProtKB-UniRule"/>
</dbReference>
<dbReference type="GO" id="GO:0003924">
    <property type="term" value="F:GTPase activity"/>
    <property type="evidence" value="ECO:0007669"/>
    <property type="project" value="UniProtKB-UniRule"/>
</dbReference>
<dbReference type="GO" id="GO:0043024">
    <property type="term" value="F:ribosomal small subunit binding"/>
    <property type="evidence" value="ECO:0007669"/>
    <property type="project" value="TreeGrafter"/>
</dbReference>
<dbReference type="GO" id="GO:0070181">
    <property type="term" value="F:small ribosomal subunit rRNA binding"/>
    <property type="evidence" value="ECO:0007669"/>
    <property type="project" value="UniProtKB-UniRule"/>
</dbReference>
<dbReference type="GO" id="GO:0000028">
    <property type="term" value="P:ribosomal small subunit assembly"/>
    <property type="evidence" value="ECO:0007669"/>
    <property type="project" value="TreeGrafter"/>
</dbReference>
<dbReference type="CDD" id="cd04163">
    <property type="entry name" value="Era"/>
    <property type="match status" value="1"/>
</dbReference>
<dbReference type="CDD" id="cd22534">
    <property type="entry name" value="KH-II_Era"/>
    <property type="match status" value="1"/>
</dbReference>
<dbReference type="FunFam" id="3.30.300.20:FF:000003">
    <property type="entry name" value="GTPase Era"/>
    <property type="match status" value="1"/>
</dbReference>
<dbReference type="FunFam" id="3.40.50.300:FF:000094">
    <property type="entry name" value="GTPase Era"/>
    <property type="match status" value="1"/>
</dbReference>
<dbReference type="Gene3D" id="3.30.300.20">
    <property type="match status" value="1"/>
</dbReference>
<dbReference type="Gene3D" id="3.40.50.300">
    <property type="entry name" value="P-loop containing nucleotide triphosphate hydrolases"/>
    <property type="match status" value="1"/>
</dbReference>
<dbReference type="HAMAP" id="MF_00367">
    <property type="entry name" value="GTPase_Era"/>
    <property type="match status" value="1"/>
</dbReference>
<dbReference type="InterPro" id="IPR030388">
    <property type="entry name" value="G_ERA_dom"/>
</dbReference>
<dbReference type="InterPro" id="IPR006073">
    <property type="entry name" value="GTP-bd"/>
</dbReference>
<dbReference type="InterPro" id="IPR005662">
    <property type="entry name" value="GTPase_Era-like"/>
</dbReference>
<dbReference type="InterPro" id="IPR015946">
    <property type="entry name" value="KH_dom-like_a/b"/>
</dbReference>
<dbReference type="InterPro" id="IPR004044">
    <property type="entry name" value="KH_dom_type_2"/>
</dbReference>
<dbReference type="InterPro" id="IPR009019">
    <property type="entry name" value="KH_sf_prok-type"/>
</dbReference>
<dbReference type="InterPro" id="IPR027417">
    <property type="entry name" value="P-loop_NTPase"/>
</dbReference>
<dbReference type="InterPro" id="IPR005225">
    <property type="entry name" value="Small_GTP-bd"/>
</dbReference>
<dbReference type="NCBIfam" id="TIGR00436">
    <property type="entry name" value="era"/>
    <property type="match status" value="1"/>
</dbReference>
<dbReference type="NCBIfam" id="NF000908">
    <property type="entry name" value="PRK00089.1"/>
    <property type="match status" value="1"/>
</dbReference>
<dbReference type="NCBIfam" id="TIGR00231">
    <property type="entry name" value="small_GTP"/>
    <property type="match status" value="1"/>
</dbReference>
<dbReference type="PANTHER" id="PTHR42698">
    <property type="entry name" value="GTPASE ERA"/>
    <property type="match status" value="1"/>
</dbReference>
<dbReference type="PANTHER" id="PTHR42698:SF1">
    <property type="entry name" value="GTPASE ERA, MITOCHONDRIAL"/>
    <property type="match status" value="1"/>
</dbReference>
<dbReference type="Pfam" id="PF07650">
    <property type="entry name" value="KH_2"/>
    <property type="match status" value="1"/>
</dbReference>
<dbReference type="Pfam" id="PF01926">
    <property type="entry name" value="MMR_HSR1"/>
    <property type="match status" value="1"/>
</dbReference>
<dbReference type="SUPFAM" id="SSF52540">
    <property type="entry name" value="P-loop containing nucleoside triphosphate hydrolases"/>
    <property type="match status" value="1"/>
</dbReference>
<dbReference type="SUPFAM" id="SSF54814">
    <property type="entry name" value="Prokaryotic type KH domain (KH-domain type II)"/>
    <property type="match status" value="1"/>
</dbReference>
<dbReference type="PROSITE" id="PS51713">
    <property type="entry name" value="G_ERA"/>
    <property type="match status" value="1"/>
</dbReference>
<dbReference type="PROSITE" id="PS50823">
    <property type="entry name" value="KH_TYPE_2"/>
    <property type="match status" value="1"/>
</dbReference>